<gene>
    <name evidence="1" type="primary">rimP</name>
    <name type="ordered locus">PFL_0842</name>
</gene>
<dbReference type="EMBL" id="CP000076">
    <property type="status" value="NOT_ANNOTATED_CDS"/>
    <property type="molecule type" value="Genomic_DNA"/>
</dbReference>
<dbReference type="SMR" id="Q4KIF8"/>
<dbReference type="Proteomes" id="UP000008540">
    <property type="component" value="Chromosome"/>
</dbReference>
<dbReference type="GO" id="GO:0005829">
    <property type="term" value="C:cytosol"/>
    <property type="evidence" value="ECO:0007669"/>
    <property type="project" value="TreeGrafter"/>
</dbReference>
<dbReference type="GO" id="GO:0000028">
    <property type="term" value="P:ribosomal small subunit assembly"/>
    <property type="evidence" value="ECO:0007669"/>
    <property type="project" value="TreeGrafter"/>
</dbReference>
<dbReference type="GO" id="GO:0006412">
    <property type="term" value="P:translation"/>
    <property type="evidence" value="ECO:0007669"/>
    <property type="project" value="TreeGrafter"/>
</dbReference>
<dbReference type="CDD" id="cd01734">
    <property type="entry name" value="YlxS_C"/>
    <property type="match status" value="1"/>
</dbReference>
<dbReference type="FunFam" id="3.30.300.70:FF:000001">
    <property type="entry name" value="Ribosome maturation factor RimP"/>
    <property type="match status" value="1"/>
</dbReference>
<dbReference type="Gene3D" id="2.30.30.180">
    <property type="entry name" value="Ribosome maturation factor RimP, C-terminal domain"/>
    <property type="match status" value="1"/>
</dbReference>
<dbReference type="Gene3D" id="3.30.300.70">
    <property type="entry name" value="RimP-like superfamily, N-terminal"/>
    <property type="match status" value="1"/>
</dbReference>
<dbReference type="HAMAP" id="MF_01077">
    <property type="entry name" value="RimP"/>
    <property type="match status" value="1"/>
</dbReference>
<dbReference type="InterPro" id="IPR003728">
    <property type="entry name" value="Ribosome_maturation_RimP"/>
</dbReference>
<dbReference type="InterPro" id="IPR028998">
    <property type="entry name" value="RimP_C"/>
</dbReference>
<dbReference type="InterPro" id="IPR036847">
    <property type="entry name" value="RimP_C_sf"/>
</dbReference>
<dbReference type="InterPro" id="IPR028989">
    <property type="entry name" value="RimP_N"/>
</dbReference>
<dbReference type="InterPro" id="IPR035956">
    <property type="entry name" value="RimP_N_sf"/>
</dbReference>
<dbReference type="NCBIfam" id="NF000927">
    <property type="entry name" value="PRK00092.1-1"/>
    <property type="match status" value="1"/>
</dbReference>
<dbReference type="PANTHER" id="PTHR33867">
    <property type="entry name" value="RIBOSOME MATURATION FACTOR RIMP"/>
    <property type="match status" value="1"/>
</dbReference>
<dbReference type="PANTHER" id="PTHR33867:SF1">
    <property type="entry name" value="RIBOSOME MATURATION FACTOR RIMP"/>
    <property type="match status" value="1"/>
</dbReference>
<dbReference type="Pfam" id="PF17384">
    <property type="entry name" value="DUF150_C"/>
    <property type="match status" value="1"/>
</dbReference>
<dbReference type="Pfam" id="PF02576">
    <property type="entry name" value="RimP_N"/>
    <property type="match status" value="1"/>
</dbReference>
<dbReference type="SUPFAM" id="SSF74942">
    <property type="entry name" value="YhbC-like, C-terminal domain"/>
    <property type="match status" value="1"/>
</dbReference>
<dbReference type="SUPFAM" id="SSF75420">
    <property type="entry name" value="YhbC-like, N-terminal domain"/>
    <property type="match status" value="1"/>
</dbReference>
<organism>
    <name type="scientific">Pseudomonas fluorescens (strain ATCC BAA-477 / NRRL B-23932 / Pf-5)</name>
    <dbReference type="NCBI Taxonomy" id="220664"/>
    <lineage>
        <taxon>Bacteria</taxon>
        <taxon>Pseudomonadati</taxon>
        <taxon>Pseudomonadota</taxon>
        <taxon>Gammaproteobacteria</taxon>
        <taxon>Pseudomonadales</taxon>
        <taxon>Pseudomonadaceae</taxon>
        <taxon>Pseudomonas</taxon>
    </lineage>
</organism>
<protein>
    <recommendedName>
        <fullName evidence="1">Ribosome maturation factor RimP</fullName>
    </recommendedName>
</protein>
<feature type="chain" id="PRO_0000229265" description="Ribosome maturation factor RimP">
    <location>
        <begin position="1"/>
        <end position="158"/>
    </location>
</feature>
<reference key="1">
    <citation type="journal article" date="2005" name="Nat. Biotechnol.">
        <title>Complete genome sequence of the plant commensal Pseudomonas fluorescens Pf-5.</title>
        <authorList>
            <person name="Paulsen I.T."/>
            <person name="Press C.M."/>
            <person name="Ravel J."/>
            <person name="Kobayashi D.Y."/>
            <person name="Myers G.S.A."/>
            <person name="Mavrodi D.V."/>
            <person name="DeBoy R.T."/>
            <person name="Seshadri R."/>
            <person name="Ren Q."/>
            <person name="Madupu R."/>
            <person name="Dodson R.J."/>
            <person name="Durkin A.S."/>
            <person name="Brinkac L.M."/>
            <person name="Daugherty S.C."/>
            <person name="Sullivan S.A."/>
            <person name="Rosovitz M.J."/>
            <person name="Gwinn M.L."/>
            <person name="Zhou L."/>
            <person name="Schneider D.J."/>
            <person name="Cartinhour S.W."/>
            <person name="Nelson W.C."/>
            <person name="Weidman J."/>
            <person name="Watkins K."/>
            <person name="Tran K."/>
            <person name="Khouri H."/>
            <person name="Pierson E.A."/>
            <person name="Pierson L.S. III"/>
            <person name="Thomashow L.S."/>
            <person name="Loper J.E."/>
        </authorList>
    </citation>
    <scope>NUCLEOTIDE SEQUENCE [LARGE SCALE GENOMIC DNA]</scope>
    <source>
        <strain>ATCC BAA-477 / NRRL B-23932 / Pf-5</strain>
    </source>
</reference>
<accession>Q4KIF8</accession>
<keyword id="KW-0963">Cytoplasm</keyword>
<keyword id="KW-0690">Ribosome biogenesis</keyword>
<name>RIMP_PSEF5</name>
<comment type="function">
    <text evidence="1">Required for maturation of 30S ribosomal subunits.</text>
</comment>
<comment type="subcellular location">
    <subcellularLocation>
        <location evidence="1">Cytoplasm</location>
    </subcellularLocation>
</comment>
<comment type="similarity">
    <text evidence="1">Belongs to the RimP family.</text>
</comment>
<proteinExistence type="inferred from homology"/>
<sequence length="158" mass="17689">MHEGVQVSSKLEQLQALLAPVVVALGYECWGIEFSAQGRHSLLRVYIDKEGGVLVDDCAIVSRQISGVLDVEDPISVEYTLEVSSPGMERPLFTLEQFAKYVGEQVKIKLRSPFEGRRNFQGLLRGVEEQDVVVQVDDHEFLLPIDMIDKANIIPSFD</sequence>
<evidence type="ECO:0000255" key="1">
    <source>
        <dbReference type="HAMAP-Rule" id="MF_01077"/>
    </source>
</evidence>